<comment type="function">
    <text evidence="1">This is one of the proteins that bind and probably mediate the attachment of the 5S RNA into the large ribosomal subunit, where it forms part of the central protuberance. In the 70S ribosome it contacts protein S13 of the 30S subunit (bridge B1b), connecting the 2 subunits; this bridge is implicated in subunit movement. Contacts the P site tRNA; the 5S rRNA and some of its associated proteins might help stabilize positioning of ribosome-bound tRNAs.</text>
</comment>
<comment type="subunit">
    <text evidence="1">Part of the 50S ribosomal subunit; part of the 5S rRNA/L5/L18/L25 subcomplex. Contacts the 5S rRNA and the P site tRNA. Forms a bridge to the 30S subunit in the 70S ribosome.</text>
</comment>
<comment type="similarity">
    <text evidence="1">Belongs to the universal ribosomal protein uL5 family.</text>
</comment>
<name>RL5_MANSM</name>
<reference key="1">
    <citation type="journal article" date="2004" name="Nat. Biotechnol.">
        <title>The genome sequence of the capnophilic rumen bacterium Mannheimia succiniciproducens.</title>
        <authorList>
            <person name="Hong S.H."/>
            <person name="Kim J.S."/>
            <person name="Lee S.Y."/>
            <person name="In Y.H."/>
            <person name="Choi S.S."/>
            <person name="Rih J.-K."/>
            <person name="Kim C.H."/>
            <person name="Jeong H."/>
            <person name="Hur C.G."/>
            <person name="Kim J.J."/>
        </authorList>
    </citation>
    <scope>NUCLEOTIDE SEQUENCE [LARGE SCALE GENOMIC DNA]</scope>
    <source>
        <strain>KCTC 0769BP / MBEL55E</strain>
    </source>
</reference>
<sequence length="179" mass="20308">MAKLHDYYRDQVVNELKTKFNYASVMQVPRIEKITLNMGVGEALTDKKLLDNAVADLTAISGQKPLITKARKSVAGFKIRQGYPIGCKVTLRGERMWEFLERLITIAVPRIRDFRGLSAKSFDGRGNYSMGVREQIIFPEIDYDKVDRVRGLDITITTTAKSDEEGQALLAAFNFPFRK</sequence>
<proteinExistence type="inferred from homology"/>
<protein>
    <recommendedName>
        <fullName evidence="1">Large ribosomal subunit protein uL5</fullName>
    </recommendedName>
    <alternativeName>
        <fullName evidence="2">50S ribosomal protein L5</fullName>
    </alternativeName>
</protein>
<keyword id="KW-0687">Ribonucleoprotein</keyword>
<keyword id="KW-0689">Ribosomal protein</keyword>
<keyword id="KW-0694">RNA-binding</keyword>
<keyword id="KW-0699">rRNA-binding</keyword>
<keyword id="KW-0820">tRNA-binding</keyword>
<accession>Q65QW7</accession>
<gene>
    <name evidence="1" type="primary">rplE</name>
    <name type="ordered locus">MS2036</name>
</gene>
<organism>
    <name type="scientific">Mannheimia succiniciproducens (strain KCTC 0769BP / MBEL55E)</name>
    <dbReference type="NCBI Taxonomy" id="221988"/>
    <lineage>
        <taxon>Bacteria</taxon>
        <taxon>Pseudomonadati</taxon>
        <taxon>Pseudomonadota</taxon>
        <taxon>Gammaproteobacteria</taxon>
        <taxon>Pasteurellales</taxon>
        <taxon>Pasteurellaceae</taxon>
        <taxon>Basfia</taxon>
    </lineage>
</organism>
<evidence type="ECO:0000255" key="1">
    <source>
        <dbReference type="HAMAP-Rule" id="MF_01333"/>
    </source>
</evidence>
<evidence type="ECO:0000305" key="2"/>
<feature type="chain" id="PRO_0000243018" description="Large ribosomal subunit protein uL5">
    <location>
        <begin position="1"/>
        <end position="179"/>
    </location>
</feature>
<dbReference type="EMBL" id="AE016827">
    <property type="protein sequence ID" value="AAU38643.1"/>
    <property type="molecule type" value="Genomic_DNA"/>
</dbReference>
<dbReference type="RefSeq" id="WP_011201194.1">
    <property type="nucleotide sequence ID" value="NC_006300.1"/>
</dbReference>
<dbReference type="SMR" id="Q65QW7"/>
<dbReference type="STRING" id="221988.MS2036"/>
<dbReference type="KEGG" id="msu:MS2036"/>
<dbReference type="eggNOG" id="COG0094">
    <property type="taxonomic scope" value="Bacteria"/>
</dbReference>
<dbReference type="HOGENOM" id="CLU_061015_2_1_6"/>
<dbReference type="OrthoDB" id="9806626at2"/>
<dbReference type="Proteomes" id="UP000000607">
    <property type="component" value="Chromosome"/>
</dbReference>
<dbReference type="GO" id="GO:1990904">
    <property type="term" value="C:ribonucleoprotein complex"/>
    <property type="evidence" value="ECO:0007669"/>
    <property type="project" value="UniProtKB-KW"/>
</dbReference>
<dbReference type="GO" id="GO:0005840">
    <property type="term" value="C:ribosome"/>
    <property type="evidence" value="ECO:0007669"/>
    <property type="project" value="UniProtKB-KW"/>
</dbReference>
<dbReference type="GO" id="GO:0019843">
    <property type="term" value="F:rRNA binding"/>
    <property type="evidence" value="ECO:0007669"/>
    <property type="project" value="UniProtKB-UniRule"/>
</dbReference>
<dbReference type="GO" id="GO:0003735">
    <property type="term" value="F:structural constituent of ribosome"/>
    <property type="evidence" value="ECO:0007669"/>
    <property type="project" value="InterPro"/>
</dbReference>
<dbReference type="GO" id="GO:0000049">
    <property type="term" value="F:tRNA binding"/>
    <property type="evidence" value="ECO:0007669"/>
    <property type="project" value="UniProtKB-UniRule"/>
</dbReference>
<dbReference type="GO" id="GO:0006412">
    <property type="term" value="P:translation"/>
    <property type="evidence" value="ECO:0007669"/>
    <property type="project" value="UniProtKB-UniRule"/>
</dbReference>
<dbReference type="FunFam" id="3.30.1440.10:FF:000001">
    <property type="entry name" value="50S ribosomal protein L5"/>
    <property type="match status" value="1"/>
</dbReference>
<dbReference type="Gene3D" id="3.30.1440.10">
    <property type="match status" value="1"/>
</dbReference>
<dbReference type="HAMAP" id="MF_01333_B">
    <property type="entry name" value="Ribosomal_uL5_B"/>
    <property type="match status" value="1"/>
</dbReference>
<dbReference type="InterPro" id="IPR002132">
    <property type="entry name" value="Ribosomal_uL5"/>
</dbReference>
<dbReference type="InterPro" id="IPR020930">
    <property type="entry name" value="Ribosomal_uL5_bac-type"/>
</dbReference>
<dbReference type="InterPro" id="IPR031309">
    <property type="entry name" value="Ribosomal_uL5_C"/>
</dbReference>
<dbReference type="InterPro" id="IPR020929">
    <property type="entry name" value="Ribosomal_uL5_CS"/>
</dbReference>
<dbReference type="InterPro" id="IPR022803">
    <property type="entry name" value="Ribosomal_uL5_dom_sf"/>
</dbReference>
<dbReference type="InterPro" id="IPR031310">
    <property type="entry name" value="Ribosomal_uL5_N"/>
</dbReference>
<dbReference type="NCBIfam" id="NF000585">
    <property type="entry name" value="PRK00010.1"/>
    <property type="match status" value="1"/>
</dbReference>
<dbReference type="PANTHER" id="PTHR11994">
    <property type="entry name" value="60S RIBOSOMAL PROTEIN L11-RELATED"/>
    <property type="match status" value="1"/>
</dbReference>
<dbReference type="Pfam" id="PF00281">
    <property type="entry name" value="Ribosomal_L5"/>
    <property type="match status" value="1"/>
</dbReference>
<dbReference type="Pfam" id="PF00673">
    <property type="entry name" value="Ribosomal_L5_C"/>
    <property type="match status" value="1"/>
</dbReference>
<dbReference type="PIRSF" id="PIRSF002161">
    <property type="entry name" value="Ribosomal_L5"/>
    <property type="match status" value="1"/>
</dbReference>
<dbReference type="SUPFAM" id="SSF55282">
    <property type="entry name" value="RL5-like"/>
    <property type="match status" value="1"/>
</dbReference>
<dbReference type="PROSITE" id="PS00358">
    <property type="entry name" value="RIBOSOMAL_L5"/>
    <property type="match status" value="1"/>
</dbReference>